<protein>
    <recommendedName>
        <fullName evidence="1">DNA ligase</fullName>
        <ecNumber evidence="1">6.5.1.2</ecNumber>
    </recommendedName>
    <alternativeName>
        <fullName evidence="1">Polydeoxyribonucleotide synthase [NAD(+)]</fullName>
    </alternativeName>
</protein>
<comment type="function">
    <text evidence="1">DNA ligase that catalyzes the formation of phosphodiester linkages between 5'-phosphoryl and 3'-hydroxyl groups in double-stranded DNA using NAD as a coenzyme and as the energy source for the reaction. It is essential for DNA replication and repair of damaged DNA.</text>
</comment>
<comment type="catalytic activity">
    <reaction evidence="1">
        <text>NAD(+) + (deoxyribonucleotide)n-3'-hydroxyl + 5'-phospho-(deoxyribonucleotide)m = (deoxyribonucleotide)n+m + AMP + beta-nicotinamide D-nucleotide.</text>
        <dbReference type="EC" id="6.5.1.2"/>
    </reaction>
</comment>
<comment type="cofactor">
    <cofactor evidence="1">
        <name>Mg(2+)</name>
        <dbReference type="ChEBI" id="CHEBI:18420"/>
    </cofactor>
    <cofactor evidence="1">
        <name>Mn(2+)</name>
        <dbReference type="ChEBI" id="CHEBI:29035"/>
    </cofactor>
</comment>
<comment type="similarity">
    <text evidence="1">Belongs to the NAD-dependent DNA ligase family. LigA subfamily.</text>
</comment>
<organism>
    <name type="scientific">Thermoanaerobacter pseudethanolicus (strain ATCC 33223 / 39E)</name>
    <name type="common">Clostridium thermohydrosulfuricum</name>
    <dbReference type="NCBI Taxonomy" id="340099"/>
    <lineage>
        <taxon>Bacteria</taxon>
        <taxon>Bacillati</taxon>
        <taxon>Bacillota</taxon>
        <taxon>Clostridia</taxon>
        <taxon>Thermoanaerobacterales</taxon>
        <taxon>Thermoanaerobacteraceae</taxon>
        <taxon>Thermoanaerobacter</taxon>
    </lineage>
</organism>
<proteinExistence type="inferred from homology"/>
<keyword id="KW-0227">DNA damage</keyword>
<keyword id="KW-0234">DNA repair</keyword>
<keyword id="KW-0235">DNA replication</keyword>
<keyword id="KW-0436">Ligase</keyword>
<keyword id="KW-0460">Magnesium</keyword>
<keyword id="KW-0464">Manganese</keyword>
<keyword id="KW-0479">Metal-binding</keyword>
<keyword id="KW-0520">NAD</keyword>
<keyword id="KW-1185">Reference proteome</keyword>
<keyword id="KW-0862">Zinc</keyword>
<dbReference type="EC" id="6.5.1.2" evidence="1"/>
<dbReference type="EMBL" id="CP000924">
    <property type="protein sequence ID" value="ABY95331.1"/>
    <property type="molecule type" value="Genomic_DNA"/>
</dbReference>
<dbReference type="RefSeq" id="WP_012269558.1">
    <property type="nucleotide sequence ID" value="NC_010321.1"/>
</dbReference>
<dbReference type="SMR" id="B0KBN6"/>
<dbReference type="STRING" id="340099.Teth39_1694"/>
<dbReference type="KEGG" id="tpd:Teth39_1694"/>
<dbReference type="eggNOG" id="COG0272">
    <property type="taxonomic scope" value="Bacteria"/>
</dbReference>
<dbReference type="HOGENOM" id="CLU_007764_2_1_9"/>
<dbReference type="Proteomes" id="UP000002156">
    <property type="component" value="Chromosome"/>
</dbReference>
<dbReference type="GO" id="GO:0005829">
    <property type="term" value="C:cytosol"/>
    <property type="evidence" value="ECO:0007669"/>
    <property type="project" value="TreeGrafter"/>
</dbReference>
<dbReference type="GO" id="GO:0003677">
    <property type="term" value="F:DNA binding"/>
    <property type="evidence" value="ECO:0007669"/>
    <property type="project" value="InterPro"/>
</dbReference>
<dbReference type="GO" id="GO:0003911">
    <property type="term" value="F:DNA ligase (NAD+) activity"/>
    <property type="evidence" value="ECO:0007669"/>
    <property type="project" value="UniProtKB-UniRule"/>
</dbReference>
<dbReference type="GO" id="GO:0046872">
    <property type="term" value="F:metal ion binding"/>
    <property type="evidence" value="ECO:0007669"/>
    <property type="project" value="UniProtKB-KW"/>
</dbReference>
<dbReference type="GO" id="GO:0006281">
    <property type="term" value="P:DNA repair"/>
    <property type="evidence" value="ECO:0007669"/>
    <property type="project" value="UniProtKB-KW"/>
</dbReference>
<dbReference type="GO" id="GO:0006260">
    <property type="term" value="P:DNA replication"/>
    <property type="evidence" value="ECO:0007669"/>
    <property type="project" value="UniProtKB-KW"/>
</dbReference>
<dbReference type="CDD" id="cd17748">
    <property type="entry name" value="BRCT_DNA_ligase_like"/>
    <property type="match status" value="1"/>
</dbReference>
<dbReference type="CDD" id="cd00114">
    <property type="entry name" value="LIGANc"/>
    <property type="match status" value="1"/>
</dbReference>
<dbReference type="FunFam" id="1.10.150.20:FF:000006">
    <property type="entry name" value="DNA ligase"/>
    <property type="match status" value="1"/>
</dbReference>
<dbReference type="FunFam" id="1.10.150.20:FF:000007">
    <property type="entry name" value="DNA ligase"/>
    <property type="match status" value="1"/>
</dbReference>
<dbReference type="FunFam" id="1.10.287.610:FF:000002">
    <property type="entry name" value="DNA ligase"/>
    <property type="match status" value="1"/>
</dbReference>
<dbReference type="FunFam" id="2.40.50.140:FF:000012">
    <property type="entry name" value="DNA ligase"/>
    <property type="match status" value="1"/>
</dbReference>
<dbReference type="FunFam" id="3.30.470.30:FF:000001">
    <property type="entry name" value="DNA ligase"/>
    <property type="match status" value="1"/>
</dbReference>
<dbReference type="Gene3D" id="6.20.10.30">
    <property type="match status" value="1"/>
</dbReference>
<dbReference type="Gene3D" id="1.10.150.20">
    <property type="entry name" value="5' to 3' exonuclease, C-terminal subdomain"/>
    <property type="match status" value="2"/>
</dbReference>
<dbReference type="Gene3D" id="3.40.50.10190">
    <property type="entry name" value="BRCT domain"/>
    <property type="match status" value="1"/>
</dbReference>
<dbReference type="Gene3D" id="3.30.470.30">
    <property type="entry name" value="DNA ligase/mRNA capping enzyme"/>
    <property type="match status" value="1"/>
</dbReference>
<dbReference type="Gene3D" id="1.10.287.610">
    <property type="entry name" value="Helix hairpin bin"/>
    <property type="match status" value="1"/>
</dbReference>
<dbReference type="Gene3D" id="2.40.50.140">
    <property type="entry name" value="Nucleic acid-binding proteins"/>
    <property type="match status" value="1"/>
</dbReference>
<dbReference type="HAMAP" id="MF_01588">
    <property type="entry name" value="DNA_ligase_A"/>
    <property type="match status" value="1"/>
</dbReference>
<dbReference type="InterPro" id="IPR001357">
    <property type="entry name" value="BRCT_dom"/>
</dbReference>
<dbReference type="InterPro" id="IPR036420">
    <property type="entry name" value="BRCT_dom_sf"/>
</dbReference>
<dbReference type="InterPro" id="IPR041663">
    <property type="entry name" value="DisA/LigA_HHH"/>
</dbReference>
<dbReference type="InterPro" id="IPR001679">
    <property type="entry name" value="DNA_ligase"/>
</dbReference>
<dbReference type="InterPro" id="IPR018239">
    <property type="entry name" value="DNA_ligase_AS"/>
</dbReference>
<dbReference type="InterPro" id="IPR033136">
    <property type="entry name" value="DNA_ligase_CS"/>
</dbReference>
<dbReference type="InterPro" id="IPR013839">
    <property type="entry name" value="DNAligase_adenylation"/>
</dbReference>
<dbReference type="InterPro" id="IPR013840">
    <property type="entry name" value="DNAligase_N"/>
</dbReference>
<dbReference type="InterPro" id="IPR003583">
    <property type="entry name" value="Hlx-hairpin-Hlx_DNA-bd_motif"/>
</dbReference>
<dbReference type="InterPro" id="IPR012340">
    <property type="entry name" value="NA-bd_OB-fold"/>
</dbReference>
<dbReference type="InterPro" id="IPR004150">
    <property type="entry name" value="NAD_DNA_ligase_OB"/>
</dbReference>
<dbReference type="InterPro" id="IPR010994">
    <property type="entry name" value="RuvA_2-like"/>
</dbReference>
<dbReference type="InterPro" id="IPR004149">
    <property type="entry name" value="Znf_DNAligase_C4"/>
</dbReference>
<dbReference type="NCBIfam" id="TIGR00575">
    <property type="entry name" value="dnlj"/>
    <property type="match status" value="1"/>
</dbReference>
<dbReference type="NCBIfam" id="NF005932">
    <property type="entry name" value="PRK07956.1"/>
    <property type="match status" value="1"/>
</dbReference>
<dbReference type="PANTHER" id="PTHR23389">
    <property type="entry name" value="CHROMOSOME TRANSMISSION FIDELITY FACTOR 18"/>
    <property type="match status" value="1"/>
</dbReference>
<dbReference type="PANTHER" id="PTHR23389:SF9">
    <property type="entry name" value="DNA LIGASE"/>
    <property type="match status" value="1"/>
</dbReference>
<dbReference type="Pfam" id="PF00533">
    <property type="entry name" value="BRCT"/>
    <property type="match status" value="1"/>
</dbReference>
<dbReference type="Pfam" id="PF01653">
    <property type="entry name" value="DNA_ligase_aden"/>
    <property type="match status" value="1"/>
</dbReference>
<dbReference type="Pfam" id="PF03120">
    <property type="entry name" value="DNA_ligase_OB"/>
    <property type="match status" value="1"/>
</dbReference>
<dbReference type="Pfam" id="PF03119">
    <property type="entry name" value="DNA_ligase_ZBD"/>
    <property type="match status" value="1"/>
</dbReference>
<dbReference type="Pfam" id="PF12826">
    <property type="entry name" value="HHH_2"/>
    <property type="match status" value="1"/>
</dbReference>
<dbReference type="Pfam" id="PF14520">
    <property type="entry name" value="HHH_5"/>
    <property type="match status" value="1"/>
</dbReference>
<dbReference type="Pfam" id="PF22745">
    <property type="entry name" value="Nlig-Ia"/>
    <property type="match status" value="1"/>
</dbReference>
<dbReference type="PIRSF" id="PIRSF001604">
    <property type="entry name" value="LigA"/>
    <property type="match status" value="1"/>
</dbReference>
<dbReference type="SMART" id="SM00292">
    <property type="entry name" value="BRCT"/>
    <property type="match status" value="1"/>
</dbReference>
<dbReference type="SMART" id="SM00278">
    <property type="entry name" value="HhH1"/>
    <property type="match status" value="3"/>
</dbReference>
<dbReference type="SMART" id="SM00532">
    <property type="entry name" value="LIGANc"/>
    <property type="match status" value="1"/>
</dbReference>
<dbReference type="SUPFAM" id="SSF52113">
    <property type="entry name" value="BRCT domain"/>
    <property type="match status" value="1"/>
</dbReference>
<dbReference type="SUPFAM" id="SSF56091">
    <property type="entry name" value="DNA ligase/mRNA capping enzyme, catalytic domain"/>
    <property type="match status" value="1"/>
</dbReference>
<dbReference type="SUPFAM" id="SSF50249">
    <property type="entry name" value="Nucleic acid-binding proteins"/>
    <property type="match status" value="1"/>
</dbReference>
<dbReference type="SUPFAM" id="SSF47781">
    <property type="entry name" value="RuvA domain 2-like"/>
    <property type="match status" value="1"/>
</dbReference>
<dbReference type="PROSITE" id="PS50172">
    <property type="entry name" value="BRCT"/>
    <property type="match status" value="1"/>
</dbReference>
<dbReference type="PROSITE" id="PS01055">
    <property type="entry name" value="DNA_LIGASE_N1"/>
    <property type="match status" value="1"/>
</dbReference>
<dbReference type="PROSITE" id="PS01056">
    <property type="entry name" value="DNA_LIGASE_N2"/>
    <property type="match status" value="1"/>
</dbReference>
<name>DNLJ_THEP3</name>
<sequence>MDPKERIKELREKINYHNYRYYVLDQPEISDYEYDMLMRELIELEEKYPELKTPDSPSQRVGGEPLKEFEPFTHVVPMLSLANAFSEGELRDFDRRVREAVGDVEYVVELKIDGLSVELIYEKGIFTVGSTRGDGIVGENVTQNLKTIKSIPLRLKDDVSLVVRGEVFMPRASFEKLNEEREKLGESLFANPRNAAAGSLRQLDPKVTAKRDLDIFIFNLQKIEGRKFKTHIETLEFLNEQGFKIIPIHKKCSNIDEVIKEIEEIRNLRDKLPYDIDGAVVKVNDLEKREILGQTAKDPRWAIAFKYPAERKKTKVLDIIVQVGRTGALTPTAILEPVAISGSVVSRATLHNEDYIKEKDIRIGDTVIVQKAGEIIPEVVEVVKEERTGQEREFVMPDRCPECGALAVRLLGEAIRRCTGLNCPAQLLRGIIHFASKDAMDIEGLGPAIINQLLSKGLIHNIADLYYLKYEDLIQLERMGDKSVKNLLNAIEESKTRDLDRLLFGLGINLIGSKAAQVIAEHFKTMDNIMKAKFEDFTQLPDIGPKMARSIVSFFAEKQNVEIIEKLKNAGVNMKKIPKEKVNNIFEGKTFVLTGALGNYTREEATRIIEERGGKVTNSVSKKTDYVLVGKDPGSKLKKAQELGIKIIDEKQFEEMLKGENI</sequence>
<reference key="1">
    <citation type="submission" date="2008-01" db="EMBL/GenBank/DDBJ databases">
        <title>Complete sequence of Thermoanaerobacter pseudethanolicus 39E.</title>
        <authorList>
            <person name="Copeland A."/>
            <person name="Lucas S."/>
            <person name="Lapidus A."/>
            <person name="Barry K."/>
            <person name="Glavina del Rio T."/>
            <person name="Dalin E."/>
            <person name="Tice H."/>
            <person name="Pitluck S."/>
            <person name="Bruce D."/>
            <person name="Goodwin L."/>
            <person name="Saunders E."/>
            <person name="Brettin T."/>
            <person name="Detter J.C."/>
            <person name="Han C."/>
            <person name="Schmutz J."/>
            <person name="Larimer F."/>
            <person name="Land M."/>
            <person name="Hauser L."/>
            <person name="Kyrpides N."/>
            <person name="Lykidis A."/>
            <person name="Hemme C."/>
            <person name="Fields M.W."/>
            <person name="He Z."/>
            <person name="Zhou J."/>
            <person name="Richardson P."/>
        </authorList>
    </citation>
    <scope>NUCLEOTIDE SEQUENCE [LARGE SCALE GENOMIC DNA]</scope>
    <source>
        <strain>ATCC 33223 / DSM 2355 / 39E</strain>
    </source>
</reference>
<evidence type="ECO:0000255" key="1">
    <source>
        <dbReference type="HAMAP-Rule" id="MF_01588"/>
    </source>
</evidence>
<gene>
    <name evidence="1" type="primary">ligA</name>
    <name type="ordered locus">Teth39_1694</name>
</gene>
<accession>B0KBN6</accession>
<feature type="chain" id="PRO_0000380494" description="DNA ligase">
    <location>
        <begin position="1"/>
        <end position="662"/>
    </location>
</feature>
<feature type="domain" description="BRCT" evidence="1">
    <location>
        <begin position="581"/>
        <end position="662"/>
    </location>
</feature>
<feature type="active site" description="N6-AMP-lysine intermediate" evidence="1">
    <location>
        <position position="111"/>
    </location>
</feature>
<feature type="binding site" evidence="1">
    <location>
        <begin position="31"/>
        <end position="35"/>
    </location>
    <ligand>
        <name>NAD(+)</name>
        <dbReference type="ChEBI" id="CHEBI:57540"/>
    </ligand>
</feature>
<feature type="binding site" evidence="1">
    <location>
        <begin position="80"/>
        <end position="81"/>
    </location>
    <ligand>
        <name>NAD(+)</name>
        <dbReference type="ChEBI" id="CHEBI:57540"/>
    </ligand>
</feature>
<feature type="binding site" evidence="1">
    <location>
        <position position="109"/>
    </location>
    <ligand>
        <name>NAD(+)</name>
        <dbReference type="ChEBI" id="CHEBI:57540"/>
    </ligand>
</feature>
<feature type="binding site" evidence="1">
    <location>
        <position position="132"/>
    </location>
    <ligand>
        <name>NAD(+)</name>
        <dbReference type="ChEBI" id="CHEBI:57540"/>
    </ligand>
</feature>
<feature type="binding site" evidence="1">
    <location>
        <position position="166"/>
    </location>
    <ligand>
        <name>NAD(+)</name>
        <dbReference type="ChEBI" id="CHEBI:57540"/>
    </ligand>
</feature>
<feature type="binding site" evidence="1">
    <location>
        <position position="282"/>
    </location>
    <ligand>
        <name>NAD(+)</name>
        <dbReference type="ChEBI" id="CHEBI:57540"/>
    </ligand>
</feature>
<feature type="binding site" evidence="1">
    <location>
        <position position="306"/>
    </location>
    <ligand>
        <name>NAD(+)</name>
        <dbReference type="ChEBI" id="CHEBI:57540"/>
    </ligand>
</feature>
<feature type="binding site" evidence="1">
    <location>
        <position position="400"/>
    </location>
    <ligand>
        <name>Zn(2+)</name>
        <dbReference type="ChEBI" id="CHEBI:29105"/>
    </ligand>
</feature>
<feature type="binding site" evidence="1">
    <location>
        <position position="403"/>
    </location>
    <ligand>
        <name>Zn(2+)</name>
        <dbReference type="ChEBI" id="CHEBI:29105"/>
    </ligand>
</feature>
<feature type="binding site" evidence="1">
    <location>
        <position position="418"/>
    </location>
    <ligand>
        <name>Zn(2+)</name>
        <dbReference type="ChEBI" id="CHEBI:29105"/>
    </ligand>
</feature>
<feature type="binding site" evidence="1">
    <location>
        <position position="423"/>
    </location>
    <ligand>
        <name>Zn(2+)</name>
        <dbReference type="ChEBI" id="CHEBI:29105"/>
    </ligand>
</feature>